<feature type="chain" id="PRO_0000082025" description="Uncharacterized RNA-binding protein C23E6.01c">
    <location>
        <begin position="1"/>
        <end position="473"/>
    </location>
</feature>
<feature type="domain" description="RRM 1" evidence="1">
    <location>
        <begin position="95"/>
        <end position="165"/>
    </location>
</feature>
<feature type="domain" description="RRM 2" evidence="1">
    <location>
        <begin position="188"/>
        <end position="260"/>
    </location>
</feature>
<feature type="domain" description="RRM 3" evidence="1">
    <location>
        <begin position="305"/>
        <end position="370"/>
    </location>
</feature>
<feature type="region of interest" description="Disordered" evidence="2">
    <location>
        <begin position="1"/>
        <end position="86"/>
    </location>
</feature>
<feature type="region of interest" description="Disordered" evidence="2">
    <location>
        <begin position="448"/>
        <end position="473"/>
    </location>
</feature>
<feature type="compositionally biased region" description="Basic and acidic residues" evidence="2">
    <location>
        <begin position="10"/>
        <end position="19"/>
    </location>
</feature>
<feature type="compositionally biased region" description="Polar residues" evidence="2">
    <location>
        <begin position="20"/>
        <end position="39"/>
    </location>
</feature>
<feature type="compositionally biased region" description="Polar residues" evidence="2">
    <location>
        <begin position="55"/>
        <end position="68"/>
    </location>
</feature>
<feature type="compositionally biased region" description="Low complexity" evidence="2">
    <location>
        <begin position="69"/>
        <end position="83"/>
    </location>
</feature>
<feature type="compositionally biased region" description="Polar residues" evidence="2">
    <location>
        <begin position="453"/>
        <end position="467"/>
    </location>
</feature>
<feature type="modified residue" description="Phosphoserine" evidence="3">
    <location>
        <position position="64"/>
    </location>
</feature>
<accession>O60176</accession>
<accession>Q9P7F0</accession>
<evidence type="ECO:0000255" key="1">
    <source>
        <dbReference type="PROSITE-ProRule" id="PRU00176"/>
    </source>
</evidence>
<evidence type="ECO:0000256" key="2">
    <source>
        <dbReference type="SAM" id="MobiDB-lite"/>
    </source>
</evidence>
<evidence type="ECO:0000269" key="3">
    <source>
    </source>
</evidence>
<protein>
    <recommendedName>
        <fullName>Uncharacterized RNA-binding protein C23E6.01c</fullName>
    </recommendedName>
</protein>
<gene>
    <name type="ORF">SPBC23E6.01c</name>
    <name type="ORF">SPBPJ758.01</name>
</gene>
<dbReference type="EMBL" id="CU329671">
    <property type="protein sequence ID" value="CAB83010.2"/>
    <property type="molecule type" value="Genomic_DNA"/>
</dbReference>
<dbReference type="RefSeq" id="NP_596601.2">
    <property type="nucleotide sequence ID" value="NM_001022521.3"/>
</dbReference>
<dbReference type="SMR" id="O60176"/>
<dbReference type="BioGRID" id="277078">
    <property type="interactions" value="62"/>
</dbReference>
<dbReference type="FunCoup" id="O60176">
    <property type="interactions" value="589"/>
</dbReference>
<dbReference type="STRING" id="284812.O60176"/>
<dbReference type="iPTMnet" id="O60176"/>
<dbReference type="PaxDb" id="4896-SPBC23E6.01c.1"/>
<dbReference type="EnsemblFungi" id="SPBC23E6.01c.1">
    <property type="protein sequence ID" value="SPBC23E6.01c.1:pep"/>
    <property type="gene ID" value="SPBC23E6.01c"/>
</dbReference>
<dbReference type="GeneID" id="2540551"/>
<dbReference type="KEGG" id="spo:2540551"/>
<dbReference type="PomBase" id="SPBC23E6.01c"/>
<dbReference type="VEuPathDB" id="FungiDB:SPBC23E6.01c"/>
<dbReference type="eggNOG" id="KOG0118">
    <property type="taxonomic scope" value="Eukaryota"/>
</dbReference>
<dbReference type="HOGENOM" id="CLU_016304_6_2_1"/>
<dbReference type="InParanoid" id="O60176"/>
<dbReference type="OMA" id="LFQNFGE"/>
<dbReference type="PhylomeDB" id="O60176"/>
<dbReference type="PRO" id="PR:O60176"/>
<dbReference type="Proteomes" id="UP000002485">
    <property type="component" value="Chromosome II"/>
</dbReference>
<dbReference type="GO" id="GO:0010494">
    <property type="term" value="C:cytoplasmic stress granule"/>
    <property type="evidence" value="ECO:0000269"/>
    <property type="project" value="PomBase"/>
</dbReference>
<dbReference type="GO" id="GO:0005829">
    <property type="term" value="C:cytosol"/>
    <property type="evidence" value="ECO:0007005"/>
    <property type="project" value="PomBase"/>
</dbReference>
<dbReference type="GO" id="GO:0005685">
    <property type="term" value="C:U1 snRNP"/>
    <property type="evidence" value="ECO:0000266"/>
    <property type="project" value="PomBase"/>
</dbReference>
<dbReference type="GO" id="GO:0071004">
    <property type="term" value="C:U2-type prespliceosome"/>
    <property type="evidence" value="ECO:0000266"/>
    <property type="project" value="PomBase"/>
</dbReference>
<dbReference type="GO" id="GO:0003729">
    <property type="term" value="F:mRNA binding"/>
    <property type="evidence" value="ECO:0000318"/>
    <property type="project" value="GO_Central"/>
</dbReference>
<dbReference type="GO" id="GO:0006376">
    <property type="term" value="P:mRNA splice site recognition"/>
    <property type="evidence" value="ECO:0000318"/>
    <property type="project" value="GO_Central"/>
</dbReference>
<dbReference type="CDD" id="cd12611">
    <property type="entry name" value="RRM1_NGR1_NAM8_like"/>
    <property type="match status" value="1"/>
</dbReference>
<dbReference type="CDD" id="cd12613">
    <property type="entry name" value="RRM2_NGR1_NAM8_like"/>
    <property type="match status" value="1"/>
</dbReference>
<dbReference type="CDD" id="cd12346">
    <property type="entry name" value="RRM3_NGR1_NAM8_like"/>
    <property type="match status" value="1"/>
</dbReference>
<dbReference type="FunFam" id="3.30.70.330:FF:000065">
    <property type="entry name" value="mRNA binding post-transcriptional regulator"/>
    <property type="match status" value="1"/>
</dbReference>
<dbReference type="FunFam" id="3.30.70.330:FF:000222">
    <property type="entry name" value="mRNA binding post-transcriptional regulator"/>
    <property type="match status" value="1"/>
</dbReference>
<dbReference type="FunFam" id="3.30.70.330:FF:000227">
    <property type="entry name" value="mRNA binding post-transcriptional regulator"/>
    <property type="match status" value="1"/>
</dbReference>
<dbReference type="Gene3D" id="3.30.70.330">
    <property type="match status" value="3"/>
</dbReference>
<dbReference type="InterPro" id="IPR012677">
    <property type="entry name" value="Nucleotide-bd_a/b_plait_sf"/>
</dbReference>
<dbReference type="InterPro" id="IPR035979">
    <property type="entry name" value="RBD_domain_sf"/>
</dbReference>
<dbReference type="InterPro" id="IPR050825">
    <property type="entry name" value="RBM42_RBP45_47-like"/>
</dbReference>
<dbReference type="InterPro" id="IPR000504">
    <property type="entry name" value="RRM_dom"/>
</dbReference>
<dbReference type="PANTHER" id="PTHR47640:SF10">
    <property type="entry name" value="TRNA SELENOCYSTEINE 1-ASSOCIATED PROTEIN 1-RELATED"/>
    <property type="match status" value="1"/>
</dbReference>
<dbReference type="PANTHER" id="PTHR47640">
    <property type="entry name" value="TRNA SELENOCYSTEINE 1-ASSOCIATED PROTEIN 1-RELATED-RELATED"/>
    <property type="match status" value="1"/>
</dbReference>
<dbReference type="Pfam" id="PF00076">
    <property type="entry name" value="RRM_1"/>
    <property type="match status" value="3"/>
</dbReference>
<dbReference type="SMART" id="SM00360">
    <property type="entry name" value="RRM"/>
    <property type="match status" value="3"/>
</dbReference>
<dbReference type="SUPFAM" id="SSF54928">
    <property type="entry name" value="RNA-binding domain, RBD"/>
    <property type="match status" value="2"/>
</dbReference>
<dbReference type="PROSITE" id="PS50102">
    <property type="entry name" value="RRM"/>
    <property type="match status" value="3"/>
</dbReference>
<sequence length="473" mass="51705">MSSSPTESEILPKESHNSIDEQSQQPANTDTLVKDNSFNEQDDQEVDNDYKSNDEPVQSQDPISPNMASNESGNSENTSNYGSSRDENVYQKTTLWMGELEPWVTEAFIQQVWNTLGKAVKVKLIRNRYTGMNAGYCFVEFASPHEASSAMSMNNKPIPGTNHLFKLNWASGGGLREKSISKASEYSIFVGDLSPNVNEFDVYSLFASRYNSCKSAKIMTDPQTNVSRGYGFVRFTDENDQKSALAEMQGQICGDRPIRVGLATPKSKAHVFSPVNVVPVSMPPVGFYSAAQPVPQFADTANSTVFVGGLSKFVSEEELKYLFQNFGEIVYVKIPPGKGCGFVQFVNRQSAEIAINQLQGYPLGNSRIRLSWGRNQNPIAAPALNYQSQVSQTTIPATSLFPAMSLPPQAQFSPYPAVAPSPLALQTRGAPIGMEISIGSPALVPDQMHIPENGNSDTMPVPNTQGKHLSAEE</sequence>
<organism>
    <name type="scientific">Schizosaccharomyces pombe (strain 972 / ATCC 24843)</name>
    <name type="common">Fission yeast</name>
    <dbReference type="NCBI Taxonomy" id="284812"/>
    <lineage>
        <taxon>Eukaryota</taxon>
        <taxon>Fungi</taxon>
        <taxon>Dikarya</taxon>
        <taxon>Ascomycota</taxon>
        <taxon>Taphrinomycotina</taxon>
        <taxon>Schizosaccharomycetes</taxon>
        <taxon>Schizosaccharomycetales</taxon>
        <taxon>Schizosaccharomycetaceae</taxon>
        <taxon>Schizosaccharomyces</taxon>
    </lineage>
</organism>
<name>YG41_SCHPO</name>
<reference key="1">
    <citation type="journal article" date="2002" name="Nature">
        <title>The genome sequence of Schizosaccharomyces pombe.</title>
        <authorList>
            <person name="Wood V."/>
            <person name="Gwilliam R."/>
            <person name="Rajandream M.A."/>
            <person name="Lyne M.H."/>
            <person name="Lyne R."/>
            <person name="Stewart A."/>
            <person name="Sgouros J.G."/>
            <person name="Peat N."/>
            <person name="Hayles J."/>
            <person name="Baker S.G."/>
            <person name="Basham D."/>
            <person name="Bowman S."/>
            <person name="Brooks K."/>
            <person name="Brown D."/>
            <person name="Brown S."/>
            <person name="Chillingworth T."/>
            <person name="Churcher C.M."/>
            <person name="Collins M."/>
            <person name="Connor R."/>
            <person name="Cronin A."/>
            <person name="Davis P."/>
            <person name="Feltwell T."/>
            <person name="Fraser A."/>
            <person name="Gentles S."/>
            <person name="Goble A."/>
            <person name="Hamlin N."/>
            <person name="Harris D.E."/>
            <person name="Hidalgo J."/>
            <person name="Hodgson G."/>
            <person name="Holroyd S."/>
            <person name="Hornsby T."/>
            <person name="Howarth S."/>
            <person name="Huckle E.J."/>
            <person name="Hunt S."/>
            <person name="Jagels K."/>
            <person name="James K.D."/>
            <person name="Jones L."/>
            <person name="Jones M."/>
            <person name="Leather S."/>
            <person name="McDonald S."/>
            <person name="McLean J."/>
            <person name="Mooney P."/>
            <person name="Moule S."/>
            <person name="Mungall K.L."/>
            <person name="Murphy L.D."/>
            <person name="Niblett D."/>
            <person name="Odell C."/>
            <person name="Oliver K."/>
            <person name="O'Neil S."/>
            <person name="Pearson D."/>
            <person name="Quail M.A."/>
            <person name="Rabbinowitsch E."/>
            <person name="Rutherford K.M."/>
            <person name="Rutter S."/>
            <person name="Saunders D."/>
            <person name="Seeger K."/>
            <person name="Sharp S."/>
            <person name="Skelton J."/>
            <person name="Simmonds M.N."/>
            <person name="Squares R."/>
            <person name="Squares S."/>
            <person name="Stevens K."/>
            <person name="Taylor K."/>
            <person name="Taylor R.G."/>
            <person name="Tivey A."/>
            <person name="Walsh S.V."/>
            <person name="Warren T."/>
            <person name="Whitehead S."/>
            <person name="Woodward J.R."/>
            <person name="Volckaert G."/>
            <person name="Aert R."/>
            <person name="Robben J."/>
            <person name="Grymonprez B."/>
            <person name="Weltjens I."/>
            <person name="Vanstreels E."/>
            <person name="Rieger M."/>
            <person name="Schaefer M."/>
            <person name="Mueller-Auer S."/>
            <person name="Gabel C."/>
            <person name="Fuchs M."/>
            <person name="Duesterhoeft A."/>
            <person name="Fritzc C."/>
            <person name="Holzer E."/>
            <person name="Moestl D."/>
            <person name="Hilbert H."/>
            <person name="Borzym K."/>
            <person name="Langer I."/>
            <person name="Beck A."/>
            <person name="Lehrach H."/>
            <person name="Reinhardt R."/>
            <person name="Pohl T.M."/>
            <person name="Eger P."/>
            <person name="Zimmermann W."/>
            <person name="Wedler H."/>
            <person name="Wambutt R."/>
            <person name="Purnelle B."/>
            <person name="Goffeau A."/>
            <person name="Cadieu E."/>
            <person name="Dreano S."/>
            <person name="Gloux S."/>
            <person name="Lelaure V."/>
            <person name="Mottier S."/>
            <person name="Galibert F."/>
            <person name="Aves S.J."/>
            <person name="Xiang Z."/>
            <person name="Hunt C."/>
            <person name="Moore K."/>
            <person name="Hurst S.M."/>
            <person name="Lucas M."/>
            <person name="Rochet M."/>
            <person name="Gaillardin C."/>
            <person name="Tallada V.A."/>
            <person name="Garzon A."/>
            <person name="Thode G."/>
            <person name="Daga R.R."/>
            <person name="Cruzado L."/>
            <person name="Jimenez J."/>
            <person name="Sanchez M."/>
            <person name="del Rey F."/>
            <person name="Benito J."/>
            <person name="Dominguez A."/>
            <person name="Revuelta J.L."/>
            <person name="Moreno S."/>
            <person name="Armstrong J."/>
            <person name="Forsburg S.L."/>
            <person name="Cerutti L."/>
            <person name="Lowe T."/>
            <person name="McCombie W.R."/>
            <person name="Paulsen I."/>
            <person name="Potashkin J."/>
            <person name="Shpakovski G.V."/>
            <person name="Ussery D."/>
            <person name="Barrell B.G."/>
            <person name="Nurse P."/>
        </authorList>
    </citation>
    <scope>NUCLEOTIDE SEQUENCE [LARGE SCALE GENOMIC DNA]</scope>
    <source>
        <strain>972 / ATCC 24843</strain>
    </source>
</reference>
<reference key="2">
    <citation type="journal article" date="2008" name="J. Proteome Res.">
        <title>Phosphoproteome analysis of fission yeast.</title>
        <authorList>
            <person name="Wilson-Grady J.T."/>
            <person name="Villen J."/>
            <person name="Gygi S.P."/>
        </authorList>
    </citation>
    <scope>PHOSPHORYLATION [LARGE SCALE ANALYSIS] AT SER-64</scope>
    <scope>IDENTIFICATION BY MASS SPECTROMETRY</scope>
</reference>
<keyword id="KW-0597">Phosphoprotein</keyword>
<keyword id="KW-1185">Reference proteome</keyword>
<keyword id="KW-0677">Repeat</keyword>
<keyword id="KW-0694">RNA-binding</keyword>
<proteinExistence type="evidence at protein level"/>